<sequence>MPIFPKPKVTVILANLGTPDVPTASAVRAFLKQFLSDQRVIEIPKLLWKIILYSFVLPFRPKRVAHAYASVWGQDSPMREILFAQTDALKRQLISHYPQLDLNIVPAMTYGNPGVQHILKDLAASPQEHVILLPLFPQYSATSTAPLYDAFANWIPKQRHLPGLTIIKDYYRHPVFIQALVSSVQRFQQQHGKPQKLLMSFHGIPQPYADKGDPYADRCRETARLVAKQLGLTPDDWAISFQSRFGKQEWVKPYTDELLTTWAANGIKSVQILSPAFSADCLETLEELEIQNAELFLEAGGTSYQYIPALNTSVEHLELLRQLLQAHLDALNYSLAYSAH</sequence>
<gene>
    <name evidence="1" type="primary">hemH</name>
    <name type="ordered locus">ACIAD3255</name>
</gene>
<reference key="1">
    <citation type="journal article" date="2004" name="Nucleic Acids Res.">
        <title>Unique features revealed by the genome sequence of Acinetobacter sp. ADP1, a versatile and naturally transformation competent bacterium.</title>
        <authorList>
            <person name="Barbe V."/>
            <person name="Vallenet D."/>
            <person name="Fonknechten N."/>
            <person name="Kreimeyer A."/>
            <person name="Oztas S."/>
            <person name="Labarre L."/>
            <person name="Cruveiller S."/>
            <person name="Robert C."/>
            <person name="Duprat S."/>
            <person name="Wincker P."/>
            <person name="Ornston L.N."/>
            <person name="Weissenbach J."/>
            <person name="Marliere P."/>
            <person name="Cohen G.N."/>
            <person name="Medigue C."/>
        </authorList>
    </citation>
    <scope>NUCLEOTIDE SEQUENCE [LARGE SCALE GENOMIC DNA]</scope>
    <source>
        <strain>ATCC 33305 / BD413 / ADP1</strain>
    </source>
</reference>
<evidence type="ECO:0000255" key="1">
    <source>
        <dbReference type="HAMAP-Rule" id="MF_00323"/>
    </source>
</evidence>
<dbReference type="EC" id="4.98.1.1" evidence="1"/>
<dbReference type="EMBL" id="CR543861">
    <property type="protein sequence ID" value="CAG69935.1"/>
    <property type="molecule type" value="Genomic_DNA"/>
</dbReference>
<dbReference type="RefSeq" id="WP_004923997.1">
    <property type="nucleotide sequence ID" value="NC_005966.1"/>
</dbReference>
<dbReference type="SMR" id="Q6F7N0"/>
<dbReference type="STRING" id="202950.GCA_001485005_02903"/>
<dbReference type="GeneID" id="45235466"/>
<dbReference type="KEGG" id="aci:ACIAD3255"/>
<dbReference type="eggNOG" id="COG0276">
    <property type="taxonomic scope" value="Bacteria"/>
</dbReference>
<dbReference type="HOGENOM" id="CLU_018884_0_0_6"/>
<dbReference type="OrthoDB" id="9809741at2"/>
<dbReference type="BioCyc" id="ASP62977:ACIAD_RS14755-MONOMER"/>
<dbReference type="UniPathway" id="UPA00252">
    <property type="reaction ID" value="UER00325"/>
</dbReference>
<dbReference type="Proteomes" id="UP000000430">
    <property type="component" value="Chromosome"/>
</dbReference>
<dbReference type="GO" id="GO:0005737">
    <property type="term" value="C:cytoplasm"/>
    <property type="evidence" value="ECO:0007669"/>
    <property type="project" value="UniProtKB-SubCell"/>
</dbReference>
<dbReference type="GO" id="GO:0004325">
    <property type="term" value="F:ferrochelatase activity"/>
    <property type="evidence" value="ECO:0007669"/>
    <property type="project" value="UniProtKB-UniRule"/>
</dbReference>
<dbReference type="GO" id="GO:0046872">
    <property type="term" value="F:metal ion binding"/>
    <property type="evidence" value="ECO:0007669"/>
    <property type="project" value="UniProtKB-KW"/>
</dbReference>
<dbReference type="GO" id="GO:0006783">
    <property type="term" value="P:heme biosynthetic process"/>
    <property type="evidence" value="ECO:0007669"/>
    <property type="project" value="UniProtKB-UniRule"/>
</dbReference>
<dbReference type="CDD" id="cd00419">
    <property type="entry name" value="Ferrochelatase_C"/>
    <property type="match status" value="1"/>
</dbReference>
<dbReference type="CDD" id="cd03411">
    <property type="entry name" value="Ferrochelatase_N"/>
    <property type="match status" value="1"/>
</dbReference>
<dbReference type="FunFam" id="3.40.50.1400:FF:000002">
    <property type="entry name" value="Ferrochelatase"/>
    <property type="match status" value="1"/>
</dbReference>
<dbReference type="Gene3D" id="3.40.50.1400">
    <property type="match status" value="2"/>
</dbReference>
<dbReference type="HAMAP" id="MF_00323">
    <property type="entry name" value="Ferrochelatase"/>
    <property type="match status" value="1"/>
</dbReference>
<dbReference type="InterPro" id="IPR001015">
    <property type="entry name" value="Ferrochelatase"/>
</dbReference>
<dbReference type="InterPro" id="IPR019772">
    <property type="entry name" value="Ferrochelatase_AS"/>
</dbReference>
<dbReference type="InterPro" id="IPR033644">
    <property type="entry name" value="Ferrochelatase_C"/>
</dbReference>
<dbReference type="InterPro" id="IPR033659">
    <property type="entry name" value="Ferrochelatase_N"/>
</dbReference>
<dbReference type="NCBIfam" id="TIGR00109">
    <property type="entry name" value="hemH"/>
    <property type="match status" value="1"/>
</dbReference>
<dbReference type="PANTHER" id="PTHR11108">
    <property type="entry name" value="FERROCHELATASE"/>
    <property type="match status" value="1"/>
</dbReference>
<dbReference type="PANTHER" id="PTHR11108:SF1">
    <property type="entry name" value="FERROCHELATASE, MITOCHONDRIAL"/>
    <property type="match status" value="1"/>
</dbReference>
<dbReference type="Pfam" id="PF00762">
    <property type="entry name" value="Ferrochelatase"/>
    <property type="match status" value="1"/>
</dbReference>
<dbReference type="SUPFAM" id="SSF53800">
    <property type="entry name" value="Chelatase"/>
    <property type="match status" value="1"/>
</dbReference>
<dbReference type="PROSITE" id="PS00534">
    <property type="entry name" value="FERROCHELATASE"/>
    <property type="match status" value="1"/>
</dbReference>
<organism>
    <name type="scientific">Acinetobacter baylyi (strain ATCC 33305 / BD413 / ADP1)</name>
    <dbReference type="NCBI Taxonomy" id="62977"/>
    <lineage>
        <taxon>Bacteria</taxon>
        <taxon>Pseudomonadati</taxon>
        <taxon>Pseudomonadota</taxon>
        <taxon>Gammaproteobacteria</taxon>
        <taxon>Moraxellales</taxon>
        <taxon>Moraxellaceae</taxon>
        <taxon>Acinetobacter</taxon>
    </lineage>
</organism>
<protein>
    <recommendedName>
        <fullName evidence="1">Ferrochelatase</fullName>
        <ecNumber evidence="1">4.98.1.1</ecNumber>
    </recommendedName>
    <alternativeName>
        <fullName evidence="1">Heme synthase</fullName>
    </alternativeName>
    <alternativeName>
        <fullName evidence="1">Protoheme ferro-lyase</fullName>
    </alternativeName>
</protein>
<comment type="function">
    <text evidence="1">Catalyzes the ferrous insertion into protoporphyrin IX.</text>
</comment>
<comment type="catalytic activity">
    <reaction evidence="1">
        <text>heme b + 2 H(+) = protoporphyrin IX + Fe(2+)</text>
        <dbReference type="Rhea" id="RHEA:22584"/>
        <dbReference type="ChEBI" id="CHEBI:15378"/>
        <dbReference type="ChEBI" id="CHEBI:29033"/>
        <dbReference type="ChEBI" id="CHEBI:57306"/>
        <dbReference type="ChEBI" id="CHEBI:60344"/>
        <dbReference type="EC" id="4.98.1.1"/>
    </reaction>
</comment>
<comment type="pathway">
    <text evidence="1">Porphyrin-containing compound metabolism; protoheme biosynthesis; protoheme from protoporphyrin-IX: step 1/1.</text>
</comment>
<comment type="subcellular location">
    <subcellularLocation>
        <location evidence="1">Cytoplasm</location>
    </subcellularLocation>
</comment>
<comment type="similarity">
    <text evidence="1">Belongs to the ferrochelatase family.</text>
</comment>
<keyword id="KW-0963">Cytoplasm</keyword>
<keyword id="KW-0350">Heme biosynthesis</keyword>
<keyword id="KW-0408">Iron</keyword>
<keyword id="KW-0456">Lyase</keyword>
<keyword id="KW-0479">Metal-binding</keyword>
<keyword id="KW-0627">Porphyrin biosynthesis</keyword>
<name>HEMH_ACIAD</name>
<proteinExistence type="inferred from homology"/>
<accession>Q6F7N0</accession>
<feature type="chain" id="PRO_0000175098" description="Ferrochelatase">
    <location>
        <begin position="1"/>
        <end position="340"/>
    </location>
</feature>
<feature type="binding site" evidence="1">
    <location>
        <position position="202"/>
    </location>
    <ligand>
        <name>Fe cation</name>
        <dbReference type="ChEBI" id="CHEBI:24875"/>
    </ligand>
</feature>
<feature type="binding site" evidence="1">
    <location>
        <position position="283"/>
    </location>
    <ligand>
        <name>Fe cation</name>
        <dbReference type="ChEBI" id="CHEBI:24875"/>
    </ligand>
</feature>